<accession>P14850</accession>
<evidence type="ECO:0000269" key="1">
    <source>
    </source>
</evidence>
<evidence type="ECO:0000305" key="2"/>
<organismHost>
    <name type="scientific">Phaseolus vulgaris</name>
    <name type="common">Kidney bean</name>
    <name type="synonym">French bean</name>
    <dbReference type="NCBI Taxonomy" id="3885"/>
</organismHost>
<organismHost>
    <name type="scientific">Pisum sativum</name>
    <name type="common">Garden pea</name>
    <name type="synonym">Lathyrus oleraceus</name>
    <dbReference type="NCBI Taxonomy" id="3888"/>
</organismHost>
<dbReference type="EMBL" id="X15883">
    <property type="protein sequence ID" value="CAA33893.1"/>
    <property type="molecule type" value="Genomic_RNA"/>
</dbReference>
<dbReference type="EMBL" id="X51828">
    <property type="protein sequence ID" value="CAA36126.1"/>
    <property type="molecule type" value="Genomic_RNA"/>
</dbReference>
<dbReference type="PIR" id="S07553">
    <property type="entry name" value="S07553"/>
</dbReference>
<dbReference type="RefSeq" id="NP_040352.1">
    <property type="nucleotide sequence ID" value="NC_001368.1"/>
</dbReference>
<dbReference type="SMR" id="P14850"/>
<dbReference type="GeneID" id="962122"/>
<dbReference type="KEGG" id="vg:962122"/>
<dbReference type="Proteomes" id="UP000201257">
    <property type="component" value="Genome"/>
</dbReference>
<dbReference type="GO" id="GO:0044423">
    <property type="term" value="C:virion component"/>
    <property type="evidence" value="ECO:0007669"/>
    <property type="project" value="UniProtKB-KW"/>
</dbReference>
<dbReference type="InterPro" id="IPR007935">
    <property type="entry name" value="Tobravirus_2B"/>
</dbReference>
<dbReference type="Pfam" id="PF05271">
    <property type="entry name" value="Tobravirus_2B"/>
    <property type="match status" value="1"/>
</dbReference>
<keyword id="KW-1185">Reference proteome</keyword>
<keyword id="KW-0946">Virion</keyword>
<name>2B_PEBV</name>
<organism>
    <name type="scientific">Pea early browning virus</name>
    <dbReference type="NCBI Taxonomy" id="12294"/>
    <lineage>
        <taxon>Viruses</taxon>
        <taxon>Riboviria</taxon>
        <taxon>Orthornavirae</taxon>
        <taxon>Kitrinoviricota</taxon>
        <taxon>Alsuviricetes</taxon>
        <taxon>Martellivirales</taxon>
        <taxon>Virgaviridae</taxon>
        <taxon>Tobravirus</taxon>
    </lineage>
</organism>
<reference key="1">
    <citation type="journal article" date="1989" name="Plant Mol. Biol.">
        <title>Analysis of RNA2 of pea early browning virus strain SP5.</title>
        <authorList>
            <person name="Petersen S.G."/>
            <person name="Lehmbeck J."/>
            <person name="Borkhardt B."/>
        </authorList>
    </citation>
    <scope>NUCLEOTIDE SEQUENCE [GENOMIC RNA]</scope>
    <source>
        <strain>SP5</strain>
    </source>
</reference>
<reference key="2">
    <citation type="journal article" date="1990" name="Nucleic Acids Res.">
        <title>The complete nucleotide sequence of PEBV RNA2 reveals the presence of a novel open reading frame and provides insights into the structure of tobraviral subgenomic promoters.</title>
        <authorList>
            <person name="Goulden M.G."/>
            <person name="Lomonossoff G.P."/>
            <person name="Davies J.W."/>
            <person name="Wood K.R."/>
        </authorList>
    </citation>
    <scope>NUCLEOTIDE SEQUENCE [GENOMIC RNA]</scope>
    <source>
        <strain>SP5</strain>
    </source>
</reference>
<reference key="3">
    <citation type="journal article" date="2002" name="Virology">
        <title>Immunogold localization of tobravirus 2b nematode transmission helper protein associated with virus particles.</title>
        <authorList>
            <person name="Vellios E."/>
            <person name="Duncan G."/>
            <person name="Brown D."/>
            <person name="MacFarlane S."/>
        </authorList>
    </citation>
    <scope>SUBCELLULAR LOCATION</scope>
    <source>
        <strain>Isolate PaY4</strain>
    </source>
</reference>
<protein>
    <recommendedName>
        <fullName>Protein 2b</fullName>
    </recommendedName>
    <alternativeName>
        <fullName>29.6 kDa protein</fullName>
    </alternativeName>
</protein>
<comment type="function">
    <text>May function by interacting with a small, flexible domain located at the C-terminus of the CP, forming a bridge between the virus particle and the internal surface of the vector nematode feeding apparatus.</text>
</comment>
<comment type="subcellular location">
    <subcellularLocation>
        <location evidence="1">Virion</location>
    </subcellularLocation>
</comment>
<comment type="similarity">
    <text evidence="2">Belongs to the tobravirus protein 2b family.</text>
</comment>
<sequence length="255" mass="29559">MTNWATLWPNDRLFLSDTYQLIWFDIEADRIEHKHFKAQNSEDISMIPKGFVSFVDNRLPMCINHKGEVYIRVGSFDTAYYQKFGDLDVSDFDDQVLPPDRDFTFNKVVFGDVPQEQLDNQIRDLQSEVSILTSRNVEMNVRENDLLKKVSELEKQIRQSSHNYEKVVEDGVVLSYRKAGGLLNRMVVLNRRLVGQRFVTNQRRWENIIMGSGVHDGSSYMAFNFKESGGSLKVTFDFDKLQNLSPDDLLAMQIA</sequence>
<proteinExistence type="inferred from homology"/>
<feature type="chain" id="PRO_0000222514" description="Protein 2b">
    <location>
        <begin position="1"/>
        <end position="255"/>
    </location>
</feature>